<sequence length="180" mass="20961">MTRKSIAIDMDEVLADTLGEIIDAVNFRADLGIKMEALNGQKLKHVIPEHDGLITEVLREPGFFRHLKVMPHAQEVVKKLTEHYDVYIATAAMDVPTSFSDKYEWLLEFFPFLDPQHFVFCGRKNIVKADYLIDDNPRQLEIFTGTPIMFTAVHNINDDRFERVNSWKDVEQYFLDNIEK</sequence>
<gene>
    <name type="ordered locus">SAV0725</name>
</gene>
<reference key="1">
    <citation type="journal article" date="2001" name="Lancet">
        <title>Whole genome sequencing of meticillin-resistant Staphylococcus aureus.</title>
        <authorList>
            <person name="Kuroda M."/>
            <person name="Ohta T."/>
            <person name="Uchiyama I."/>
            <person name="Baba T."/>
            <person name="Yuzawa H."/>
            <person name="Kobayashi I."/>
            <person name="Cui L."/>
            <person name="Oguchi A."/>
            <person name="Aoki K."/>
            <person name="Nagai Y."/>
            <person name="Lian J.-Q."/>
            <person name="Ito T."/>
            <person name="Kanamori M."/>
            <person name="Matsumaru H."/>
            <person name="Maruyama A."/>
            <person name="Murakami H."/>
            <person name="Hosoyama A."/>
            <person name="Mizutani-Ui Y."/>
            <person name="Takahashi N.K."/>
            <person name="Sawano T."/>
            <person name="Inoue R."/>
            <person name="Kaito C."/>
            <person name="Sekimizu K."/>
            <person name="Hirakawa H."/>
            <person name="Kuhara S."/>
            <person name="Goto S."/>
            <person name="Yabuzaki J."/>
            <person name="Kanehisa M."/>
            <person name="Yamashita A."/>
            <person name="Oshima K."/>
            <person name="Furuya K."/>
            <person name="Yoshino C."/>
            <person name="Shiba T."/>
            <person name="Hattori M."/>
            <person name="Ogasawara N."/>
            <person name="Hayashi H."/>
            <person name="Hiramatsu K."/>
        </authorList>
    </citation>
    <scope>NUCLEOTIDE SEQUENCE [LARGE SCALE GENOMIC DNA]</scope>
    <source>
        <strain>Mu50 / ATCC 700699</strain>
    </source>
</reference>
<name>53DR_STAAM</name>
<proteinExistence type="inferred from homology"/>
<accession>P66840</accession>
<accession>Q99VP8</accession>
<evidence type="ECO:0000250" key="1">
    <source>
        <dbReference type="UniProtKB" id="Q8CTG7"/>
    </source>
</evidence>
<evidence type="ECO:0000250" key="2">
    <source>
        <dbReference type="UniProtKB" id="Q97JQ5"/>
    </source>
</evidence>
<evidence type="ECO:0000305" key="3"/>
<keyword id="KW-0378">Hydrolase</keyword>
<keyword id="KW-0460">Magnesium</keyword>
<keyword id="KW-0479">Metal-binding</keyword>
<feature type="chain" id="PRO_0000164381" description="Putative 5'(3')-deoxyribonucleotidase">
    <location>
        <begin position="1"/>
        <end position="180"/>
    </location>
</feature>
<feature type="active site" description="Nucleophile" evidence="3">
    <location>
        <position position="9"/>
    </location>
</feature>
<feature type="active site" description="Proton donor" evidence="3">
    <location>
        <position position="11"/>
    </location>
</feature>
<feature type="binding site" evidence="1">
    <location>
        <position position="9"/>
    </location>
    <ligand>
        <name>Mg(2+)</name>
        <dbReference type="ChEBI" id="CHEBI:18420"/>
    </ligand>
</feature>
<feature type="binding site" evidence="1">
    <location>
        <position position="11"/>
    </location>
    <ligand>
        <name>Mg(2+)</name>
        <dbReference type="ChEBI" id="CHEBI:18420"/>
    </ligand>
</feature>
<feature type="binding site" evidence="1">
    <location>
        <position position="135"/>
    </location>
    <ligand>
        <name>Mg(2+)</name>
        <dbReference type="ChEBI" id="CHEBI:18420"/>
    </ligand>
</feature>
<dbReference type="EC" id="3.1.3.-"/>
<dbReference type="EMBL" id="BA000017">
    <property type="protein sequence ID" value="BAB56887.1"/>
    <property type="molecule type" value="Genomic_DNA"/>
</dbReference>
<dbReference type="RefSeq" id="WP_000197262.1">
    <property type="nucleotide sequence ID" value="NC_002758.2"/>
</dbReference>
<dbReference type="SMR" id="P66840"/>
<dbReference type="KEGG" id="sav:SAV0725"/>
<dbReference type="HOGENOM" id="CLU_111510_0_0_9"/>
<dbReference type="Proteomes" id="UP000002481">
    <property type="component" value="Chromosome"/>
</dbReference>
<dbReference type="GO" id="GO:0008253">
    <property type="term" value="F:5'-nucleotidase activity"/>
    <property type="evidence" value="ECO:0007669"/>
    <property type="project" value="InterPro"/>
</dbReference>
<dbReference type="GO" id="GO:0046872">
    <property type="term" value="F:metal ion binding"/>
    <property type="evidence" value="ECO:0007669"/>
    <property type="project" value="UniProtKB-KW"/>
</dbReference>
<dbReference type="GO" id="GO:0009223">
    <property type="term" value="P:pyrimidine deoxyribonucleotide catabolic process"/>
    <property type="evidence" value="ECO:0007669"/>
    <property type="project" value="TreeGrafter"/>
</dbReference>
<dbReference type="Gene3D" id="1.10.40.40">
    <property type="entry name" value="Deoxyribonucleotidase, domain 2"/>
    <property type="match status" value="1"/>
</dbReference>
<dbReference type="Gene3D" id="3.40.50.1000">
    <property type="entry name" value="HAD superfamily/HAD-like"/>
    <property type="match status" value="1"/>
</dbReference>
<dbReference type="InterPro" id="IPR010708">
    <property type="entry name" value="5'(3')-deoxyribonucleotidase"/>
</dbReference>
<dbReference type="InterPro" id="IPR036412">
    <property type="entry name" value="HAD-like_sf"/>
</dbReference>
<dbReference type="InterPro" id="IPR023214">
    <property type="entry name" value="HAD_sf"/>
</dbReference>
<dbReference type="PANTHER" id="PTHR16504">
    <property type="entry name" value="5'(3')-DEOXYRIBONUCLEOTIDASE"/>
    <property type="match status" value="1"/>
</dbReference>
<dbReference type="PANTHER" id="PTHR16504:SF4">
    <property type="entry name" value="5'(3')-DEOXYRIBONUCLEOTIDASE"/>
    <property type="match status" value="1"/>
</dbReference>
<dbReference type="Pfam" id="PF06941">
    <property type="entry name" value="NT5C"/>
    <property type="match status" value="1"/>
</dbReference>
<dbReference type="SFLD" id="SFLDG01146">
    <property type="entry name" value="C1.2.2"/>
    <property type="match status" value="1"/>
</dbReference>
<dbReference type="SFLD" id="SFLDS00003">
    <property type="entry name" value="Haloacid_Dehalogenase"/>
    <property type="match status" value="1"/>
</dbReference>
<dbReference type="SUPFAM" id="SSF56784">
    <property type="entry name" value="HAD-like"/>
    <property type="match status" value="1"/>
</dbReference>
<protein>
    <recommendedName>
        <fullName>Putative 5'(3')-deoxyribonucleotidase</fullName>
        <ecNumber>3.1.3.-</ecNumber>
    </recommendedName>
</protein>
<organism>
    <name type="scientific">Staphylococcus aureus (strain Mu50 / ATCC 700699)</name>
    <dbReference type="NCBI Taxonomy" id="158878"/>
    <lineage>
        <taxon>Bacteria</taxon>
        <taxon>Bacillati</taxon>
        <taxon>Bacillota</taxon>
        <taxon>Bacilli</taxon>
        <taxon>Bacillales</taxon>
        <taxon>Staphylococcaceae</taxon>
        <taxon>Staphylococcus</taxon>
    </lineage>
</organism>
<comment type="function">
    <text evidence="3">Dephosphorylates the 5' and 2'(3')-phosphates of deoxyribonucleotides.</text>
</comment>
<comment type="cofactor">
    <cofactor evidence="2">
        <name>Mg(2+)</name>
        <dbReference type="ChEBI" id="CHEBI:18420"/>
    </cofactor>
</comment>
<comment type="similarity">
    <text evidence="3">Belongs to the 5'(3')-deoxyribonucleotidase family.</text>
</comment>